<organism>
    <name type="scientific">Thioalkalivibrio sulfidiphilus (strain HL-EbGR7)</name>
    <dbReference type="NCBI Taxonomy" id="396588"/>
    <lineage>
        <taxon>Bacteria</taxon>
        <taxon>Pseudomonadati</taxon>
        <taxon>Pseudomonadota</taxon>
        <taxon>Gammaproteobacteria</taxon>
        <taxon>Chromatiales</taxon>
        <taxon>Ectothiorhodospiraceae</taxon>
        <taxon>Thioalkalivibrio</taxon>
    </lineage>
</organism>
<evidence type="ECO:0000255" key="1">
    <source>
        <dbReference type="HAMAP-Rule" id="MF_01382"/>
    </source>
</evidence>
<evidence type="ECO:0000256" key="2">
    <source>
        <dbReference type="SAM" id="MobiDB-lite"/>
    </source>
</evidence>
<accession>B8GMN9</accession>
<dbReference type="EC" id="7.4.2.8" evidence="1"/>
<dbReference type="EMBL" id="CP001339">
    <property type="protein sequence ID" value="ACL71871.1"/>
    <property type="molecule type" value="Genomic_DNA"/>
</dbReference>
<dbReference type="RefSeq" id="WP_012637359.1">
    <property type="nucleotide sequence ID" value="NC_011901.1"/>
</dbReference>
<dbReference type="SMR" id="B8GMN9"/>
<dbReference type="STRING" id="396588.Tgr7_0779"/>
<dbReference type="KEGG" id="tgr:Tgr7_0779"/>
<dbReference type="eggNOG" id="COG0653">
    <property type="taxonomic scope" value="Bacteria"/>
</dbReference>
<dbReference type="HOGENOM" id="CLU_005314_3_0_6"/>
<dbReference type="OrthoDB" id="9805579at2"/>
<dbReference type="Proteomes" id="UP000002383">
    <property type="component" value="Chromosome"/>
</dbReference>
<dbReference type="GO" id="GO:0031522">
    <property type="term" value="C:cell envelope Sec protein transport complex"/>
    <property type="evidence" value="ECO:0007669"/>
    <property type="project" value="TreeGrafter"/>
</dbReference>
<dbReference type="GO" id="GO:0005829">
    <property type="term" value="C:cytosol"/>
    <property type="evidence" value="ECO:0007669"/>
    <property type="project" value="TreeGrafter"/>
</dbReference>
<dbReference type="GO" id="GO:0005886">
    <property type="term" value="C:plasma membrane"/>
    <property type="evidence" value="ECO:0007669"/>
    <property type="project" value="UniProtKB-SubCell"/>
</dbReference>
<dbReference type="GO" id="GO:0005524">
    <property type="term" value="F:ATP binding"/>
    <property type="evidence" value="ECO:0007669"/>
    <property type="project" value="UniProtKB-UniRule"/>
</dbReference>
<dbReference type="GO" id="GO:0046872">
    <property type="term" value="F:metal ion binding"/>
    <property type="evidence" value="ECO:0007669"/>
    <property type="project" value="UniProtKB-KW"/>
</dbReference>
<dbReference type="GO" id="GO:0008564">
    <property type="term" value="F:protein-exporting ATPase activity"/>
    <property type="evidence" value="ECO:0007669"/>
    <property type="project" value="UniProtKB-EC"/>
</dbReference>
<dbReference type="GO" id="GO:0065002">
    <property type="term" value="P:intracellular protein transmembrane transport"/>
    <property type="evidence" value="ECO:0007669"/>
    <property type="project" value="UniProtKB-UniRule"/>
</dbReference>
<dbReference type="GO" id="GO:0017038">
    <property type="term" value="P:protein import"/>
    <property type="evidence" value="ECO:0007669"/>
    <property type="project" value="InterPro"/>
</dbReference>
<dbReference type="GO" id="GO:0006605">
    <property type="term" value="P:protein targeting"/>
    <property type="evidence" value="ECO:0007669"/>
    <property type="project" value="UniProtKB-UniRule"/>
</dbReference>
<dbReference type="GO" id="GO:0043952">
    <property type="term" value="P:protein transport by the Sec complex"/>
    <property type="evidence" value="ECO:0007669"/>
    <property type="project" value="TreeGrafter"/>
</dbReference>
<dbReference type="CDD" id="cd17928">
    <property type="entry name" value="DEXDc_SecA"/>
    <property type="match status" value="1"/>
</dbReference>
<dbReference type="CDD" id="cd18803">
    <property type="entry name" value="SF2_C_secA"/>
    <property type="match status" value="1"/>
</dbReference>
<dbReference type="FunFam" id="3.40.50.300:FF:000113">
    <property type="entry name" value="Preprotein translocase subunit SecA"/>
    <property type="match status" value="1"/>
</dbReference>
<dbReference type="FunFam" id="3.90.1440.10:FF:000001">
    <property type="entry name" value="Preprotein translocase subunit SecA"/>
    <property type="match status" value="1"/>
</dbReference>
<dbReference type="FunFam" id="1.10.3060.10:FF:000003">
    <property type="entry name" value="Protein translocase subunit SecA"/>
    <property type="match status" value="1"/>
</dbReference>
<dbReference type="Gene3D" id="1.10.3060.10">
    <property type="entry name" value="Helical scaffold and wing domains of SecA"/>
    <property type="match status" value="1"/>
</dbReference>
<dbReference type="Gene3D" id="3.40.50.300">
    <property type="entry name" value="P-loop containing nucleotide triphosphate hydrolases"/>
    <property type="match status" value="2"/>
</dbReference>
<dbReference type="Gene3D" id="3.90.1440.10">
    <property type="entry name" value="SecA, preprotein cross-linking domain"/>
    <property type="match status" value="1"/>
</dbReference>
<dbReference type="HAMAP" id="MF_01382">
    <property type="entry name" value="SecA"/>
    <property type="match status" value="1"/>
</dbReference>
<dbReference type="InterPro" id="IPR014001">
    <property type="entry name" value="Helicase_ATP-bd"/>
</dbReference>
<dbReference type="InterPro" id="IPR001650">
    <property type="entry name" value="Helicase_C-like"/>
</dbReference>
<dbReference type="InterPro" id="IPR027417">
    <property type="entry name" value="P-loop_NTPase"/>
</dbReference>
<dbReference type="InterPro" id="IPR004027">
    <property type="entry name" value="SEC_C_motif"/>
</dbReference>
<dbReference type="InterPro" id="IPR000185">
    <property type="entry name" value="SecA"/>
</dbReference>
<dbReference type="InterPro" id="IPR011115">
    <property type="entry name" value="SecA_DEAD"/>
</dbReference>
<dbReference type="InterPro" id="IPR014018">
    <property type="entry name" value="SecA_motor_DEAD"/>
</dbReference>
<dbReference type="InterPro" id="IPR011130">
    <property type="entry name" value="SecA_preprotein_X-link_dom"/>
</dbReference>
<dbReference type="InterPro" id="IPR044722">
    <property type="entry name" value="SecA_SF2_C"/>
</dbReference>
<dbReference type="InterPro" id="IPR011116">
    <property type="entry name" value="SecA_Wing/Scaffold"/>
</dbReference>
<dbReference type="InterPro" id="IPR036266">
    <property type="entry name" value="SecA_Wing/Scaffold_sf"/>
</dbReference>
<dbReference type="InterPro" id="IPR036670">
    <property type="entry name" value="SecA_X-link_sf"/>
</dbReference>
<dbReference type="NCBIfam" id="NF009538">
    <property type="entry name" value="PRK12904.1"/>
    <property type="match status" value="1"/>
</dbReference>
<dbReference type="NCBIfam" id="TIGR00963">
    <property type="entry name" value="secA"/>
    <property type="match status" value="1"/>
</dbReference>
<dbReference type="PANTHER" id="PTHR30612:SF0">
    <property type="entry name" value="CHLOROPLAST PROTEIN-TRANSPORTING ATPASE"/>
    <property type="match status" value="1"/>
</dbReference>
<dbReference type="PANTHER" id="PTHR30612">
    <property type="entry name" value="SECA INNER MEMBRANE COMPONENT OF SEC PROTEIN SECRETION SYSTEM"/>
    <property type="match status" value="1"/>
</dbReference>
<dbReference type="Pfam" id="PF21090">
    <property type="entry name" value="P-loop_SecA"/>
    <property type="match status" value="1"/>
</dbReference>
<dbReference type="Pfam" id="PF02810">
    <property type="entry name" value="SEC-C"/>
    <property type="match status" value="1"/>
</dbReference>
<dbReference type="Pfam" id="PF07517">
    <property type="entry name" value="SecA_DEAD"/>
    <property type="match status" value="1"/>
</dbReference>
<dbReference type="Pfam" id="PF01043">
    <property type="entry name" value="SecA_PP_bind"/>
    <property type="match status" value="1"/>
</dbReference>
<dbReference type="Pfam" id="PF07516">
    <property type="entry name" value="SecA_SW"/>
    <property type="match status" value="1"/>
</dbReference>
<dbReference type="PRINTS" id="PR00906">
    <property type="entry name" value="SECA"/>
</dbReference>
<dbReference type="SMART" id="SM00957">
    <property type="entry name" value="SecA_DEAD"/>
    <property type="match status" value="1"/>
</dbReference>
<dbReference type="SMART" id="SM00958">
    <property type="entry name" value="SecA_PP_bind"/>
    <property type="match status" value="1"/>
</dbReference>
<dbReference type="SUPFAM" id="SSF81886">
    <property type="entry name" value="Helical scaffold and wing domains of SecA"/>
    <property type="match status" value="1"/>
</dbReference>
<dbReference type="SUPFAM" id="SSF52540">
    <property type="entry name" value="P-loop containing nucleoside triphosphate hydrolases"/>
    <property type="match status" value="2"/>
</dbReference>
<dbReference type="SUPFAM" id="SSF81767">
    <property type="entry name" value="Pre-protein crosslinking domain of SecA"/>
    <property type="match status" value="1"/>
</dbReference>
<dbReference type="PROSITE" id="PS51196">
    <property type="entry name" value="SECA_MOTOR_DEAD"/>
    <property type="match status" value="1"/>
</dbReference>
<protein>
    <recommendedName>
        <fullName evidence="1">Protein translocase subunit SecA</fullName>
        <ecNumber evidence="1">7.4.2.8</ecNumber>
    </recommendedName>
</protein>
<name>SECA_THISH</name>
<comment type="function">
    <text evidence="1">Part of the Sec protein translocase complex. Interacts with the SecYEG preprotein conducting channel. Has a central role in coupling the hydrolysis of ATP to the transfer of proteins into and across the cell membrane, serving both as a receptor for the preprotein-SecB complex and as an ATP-driven molecular motor driving the stepwise translocation of polypeptide chains across the membrane.</text>
</comment>
<comment type="catalytic activity">
    <reaction evidence="1">
        <text>ATP + H2O + cellular proteinSide 1 = ADP + phosphate + cellular proteinSide 2.</text>
        <dbReference type="EC" id="7.4.2.8"/>
    </reaction>
</comment>
<comment type="cofactor">
    <cofactor evidence="1">
        <name>Zn(2+)</name>
        <dbReference type="ChEBI" id="CHEBI:29105"/>
    </cofactor>
    <text evidence="1">May bind 1 zinc ion per subunit.</text>
</comment>
<comment type="subunit">
    <text evidence="1">Monomer and homodimer. Part of the essential Sec protein translocation apparatus which comprises SecA, SecYEG and auxiliary proteins SecDF-YajC and YidC.</text>
</comment>
<comment type="subcellular location">
    <subcellularLocation>
        <location evidence="1">Cell inner membrane</location>
        <topology evidence="1">Peripheral membrane protein</topology>
        <orientation evidence="1">Cytoplasmic side</orientation>
    </subcellularLocation>
    <subcellularLocation>
        <location evidence="1">Cytoplasm</location>
    </subcellularLocation>
    <text evidence="1">Distribution is 50-50.</text>
</comment>
<comment type="similarity">
    <text evidence="1">Belongs to the SecA family.</text>
</comment>
<reference key="1">
    <citation type="journal article" date="2011" name="Stand. Genomic Sci.">
        <title>Complete genome sequence of 'Thioalkalivibrio sulfidophilus' HL-EbGr7.</title>
        <authorList>
            <person name="Muyzer G."/>
            <person name="Sorokin D.Y."/>
            <person name="Mavromatis K."/>
            <person name="Lapidus A."/>
            <person name="Clum A."/>
            <person name="Ivanova N."/>
            <person name="Pati A."/>
            <person name="d'Haeseleer P."/>
            <person name="Woyke T."/>
            <person name="Kyrpides N.C."/>
        </authorList>
    </citation>
    <scope>NUCLEOTIDE SEQUENCE [LARGE SCALE GENOMIC DNA]</scope>
    <source>
        <strain>HL-EbGR7</strain>
    </source>
</reference>
<proteinExistence type="inferred from homology"/>
<feature type="chain" id="PRO_1000184251" description="Protein translocase subunit SecA">
    <location>
        <begin position="1"/>
        <end position="925"/>
    </location>
</feature>
<feature type="region of interest" description="Disordered" evidence="2">
    <location>
        <begin position="867"/>
        <end position="909"/>
    </location>
</feature>
<feature type="compositionally biased region" description="Basic and acidic residues" evidence="2">
    <location>
        <begin position="895"/>
        <end position="906"/>
    </location>
</feature>
<feature type="binding site" evidence="1">
    <location>
        <position position="87"/>
    </location>
    <ligand>
        <name>ATP</name>
        <dbReference type="ChEBI" id="CHEBI:30616"/>
    </ligand>
</feature>
<feature type="binding site" evidence="1">
    <location>
        <begin position="105"/>
        <end position="109"/>
    </location>
    <ligand>
        <name>ATP</name>
        <dbReference type="ChEBI" id="CHEBI:30616"/>
    </ligand>
</feature>
<feature type="binding site" evidence="1">
    <location>
        <position position="531"/>
    </location>
    <ligand>
        <name>ATP</name>
        <dbReference type="ChEBI" id="CHEBI:30616"/>
    </ligand>
</feature>
<feature type="binding site" evidence="1">
    <location>
        <position position="910"/>
    </location>
    <ligand>
        <name>Zn(2+)</name>
        <dbReference type="ChEBI" id="CHEBI:29105"/>
    </ligand>
</feature>
<feature type="binding site" evidence="1">
    <location>
        <position position="912"/>
    </location>
    <ligand>
        <name>Zn(2+)</name>
        <dbReference type="ChEBI" id="CHEBI:29105"/>
    </ligand>
</feature>
<feature type="binding site" evidence="1">
    <location>
        <position position="921"/>
    </location>
    <ligand>
        <name>Zn(2+)</name>
        <dbReference type="ChEBI" id="CHEBI:29105"/>
    </ligand>
</feature>
<feature type="binding site" evidence="1">
    <location>
        <position position="922"/>
    </location>
    <ligand>
        <name>Zn(2+)</name>
        <dbReference type="ChEBI" id="CHEBI:29105"/>
    </ligand>
</feature>
<keyword id="KW-0067">ATP-binding</keyword>
<keyword id="KW-0997">Cell inner membrane</keyword>
<keyword id="KW-1003">Cell membrane</keyword>
<keyword id="KW-0963">Cytoplasm</keyword>
<keyword id="KW-0472">Membrane</keyword>
<keyword id="KW-0479">Metal-binding</keyword>
<keyword id="KW-0547">Nucleotide-binding</keyword>
<keyword id="KW-0653">Protein transport</keyword>
<keyword id="KW-1185">Reference proteome</keyword>
<keyword id="KW-1278">Translocase</keyword>
<keyword id="KW-0811">Translocation</keyword>
<keyword id="KW-0813">Transport</keyword>
<keyword id="KW-0862">Zinc</keyword>
<sequence length="925" mass="104218">MVTSLVRKIFGSRNERIVKRLGKTVARINELEAELQSLDDEALKARTGQLRERLAGGESLEALLPEAFAVTREAGRRVMGMRHFDVQLIGGMVLDSGRIAEMRTGEGKTLVATLAAYLNALSGKGVHVVTVNDYLARRDAAWMGRLYHALGLSVGVINSSGGAGPDSASYLYDPGFHAEGGIAHLRPVTRREAYAADITYGTNNEFGFDYLRDNMAFRLEDRVQRELNFAIVDEVDSILIDEARTPLIISGPAGESAEMYERMNRIVPKLTPQEEEEGPGDYSVDEKMKQVFLTEDGQEKAEQLMRDAGLLAEGQGLYDAGSIALLHHLNAALRAHILFHKDVDYLVRDGQILIIDEFTGRIMAGRRWSEGLHQAIEAKEGVPIQRENQTLASITFQNYFRLYEKLSGMTGTADTEAYEFQQIYGLEVVVIPTNRPMVRNDMQDLVYMTQKEKFEAIIKEIKYCQEKRQPVLVGTASVETSEYLSGLLKKAKIAHEVLNAKQHEREAHVVEQAGRPGAVTLATNMAGRGTDIVLGGSLEAELATLGDNPKPADVDRVKADWQKRHDEVLANGGLHIIGSERHESRRIDNQLRGRAGRQGDPGSSRFFLSLEDNLMRIFASDRVKSLMQRLGMQEGEAIENAWVTKAIENAQRKVEAHNFDIRKNLLEYDDVANDQRKVVYEQRRELLETEDISETLEAVRRDVLEGVISQYIPQGSIEEQWDVPGLTHVLEQDFGLVLDIAGWLEREDDLHEETLRERIHQHAAEAYQVKEDKVGAETMRRIEKDVMLQVLDSHWKEHLAAMDYLRQGIGLRGYAQRNPKQEYKREAFEMFEALLTRIKHDVTALLMRVQVRSPEDAEALERQQRAAAGADMRFQHSQPESVLHKPEAGEGEEAQPFRRETPKVGRNDPCWCGSGKKFKHCHGKL</sequence>
<gene>
    <name evidence="1" type="primary">secA</name>
    <name type="ordered locus">Tgr7_0779</name>
</gene>